<evidence type="ECO:0000255" key="1">
    <source>
        <dbReference type="HAMAP-Rule" id="MF_00037"/>
    </source>
</evidence>
<reference key="1">
    <citation type="journal article" date="2008" name="Proc. Natl. Acad. Sci. U.S.A.">
        <title>Niche adaptation and genome expansion in the chlorophyll d-producing cyanobacterium Acaryochloris marina.</title>
        <authorList>
            <person name="Swingley W.D."/>
            <person name="Chen M."/>
            <person name="Cheung P.C."/>
            <person name="Conrad A.L."/>
            <person name="Dejesa L.C."/>
            <person name="Hao J."/>
            <person name="Honchak B.M."/>
            <person name="Karbach L.E."/>
            <person name="Kurdoglu A."/>
            <person name="Lahiri S."/>
            <person name="Mastrian S.D."/>
            <person name="Miyashita H."/>
            <person name="Page L."/>
            <person name="Ramakrishna P."/>
            <person name="Satoh S."/>
            <person name="Sattley W.M."/>
            <person name="Shimada Y."/>
            <person name="Taylor H.L."/>
            <person name="Tomo T."/>
            <person name="Tsuchiya T."/>
            <person name="Wang Z.T."/>
            <person name="Raymond J."/>
            <person name="Mimuro M."/>
            <person name="Blankenship R.E."/>
            <person name="Touchman J.W."/>
        </authorList>
    </citation>
    <scope>NUCLEOTIDE SEQUENCE [LARGE SCALE GENOMIC DNA]</scope>
    <source>
        <strain>MBIC 11017</strain>
    </source>
</reference>
<sequence length="308" mass="33584">MTQSLPSIFIDNGNCEIQPYVSLADMTTFRVGGAAEWFIAPHNLKELQASYAWANEQALPITFLGAGSNLLISDQGLPGLVISTRYLRQRTFDPETCQVTAYAGESLPKLAWQAAKRGWSGLEWAVGIPGTVGGALVMNAGAHGGCTADVLTEVHALDKDGTVQVLKPEHMAFQYRSSILQQSPKPVLLGVFQLHANQSAEQVKATTQSHLDHRLSTQPYDWPSCGSVFRNPLPRTAGWLIEQSGLKGYSLGGAQVAQKHANFILNSGNATATDIFNLIHYVQQKVEENWSLLLKPEVKMLGKFPQIT</sequence>
<protein>
    <recommendedName>
        <fullName evidence="1">UDP-N-acetylenolpyruvoylglucosamine reductase</fullName>
        <ecNumber evidence="1">1.3.1.98</ecNumber>
    </recommendedName>
    <alternativeName>
        <fullName evidence="1">UDP-N-acetylmuramate dehydrogenase</fullName>
    </alternativeName>
</protein>
<comment type="function">
    <text evidence="1">Cell wall formation.</text>
</comment>
<comment type="catalytic activity">
    <reaction evidence="1">
        <text>UDP-N-acetyl-alpha-D-muramate + NADP(+) = UDP-N-acetyl-3-O-(1-carboxyvinyl)-alpha-D-glucosamine + NADPH + H(+)</text>
        <dbReference type="Rhea" id="RHEA:12248"/>
        <dbReference type="ChEBI" id="CHEBI:15378"/>
        <dbReference type="ChEBI" id="CHEBI:57783"/>
        <dbReference type="ChEBI" id="CHEBI:58349"/>
        <dbReference type="ChEBI" id="CHEBI:68483"/>
        <dbReference type="ChEBI" id="CHEBI:70757"/>
        <dbReference type="EC" id="1.3.1.98"/>
    </reaction>
</comment>
<comment type="cofactor">
    <cofactor evidence="1">
        <name>FAD</name>
        <dbReference type="ChEBI" id="CHEBI:57692"/>
    </cofactor>
</comment>
<comment type="pathway">
    <text evidence="1">Cell wall biogenesis; peptidoglycan biosynthesis.</text>
</comment>
<comment type="subcellular location">
    <subcellularLocation>
        <location evidence="1">Cytoplasm</location>
    </subcellularLocation>
</comment>
<comment type="similarity">
    <text evidence="1">Belongs to the MurB family.</text>
</comment>
<accession>B0CCD5</accession>
<dbReference type="EC" id="1.3.1.98" evidence="1"/>
<dbReference type="EMBL" id="CP000828">
    <property type="protein sequence ID" value="ABW26820.1"/>
    <property type="molecule type" value="Genomic_DNA"/>
</dbReference>
<dbReference type="RefSeq" id="WP_012162328.1">
    <property type="nucleotide sequence ID" value="NC_009925.1"/>
</dbReference>
<dbReference type="SMR" id="B0CCD5"/>
<dbReference type="STRING" id="329726.AM1_1799"/>
<dbReference type="KEGG" id="amr:AM1_1799"/>
<dbReference type="eggNOG" id="COG0812">
    <property type="taxonomic scope" value="Bacteria"/>
</dbReference>
<dbReference type="HOGENOM" id="CLU_035304_1_1_3"/>
<dbReference type="OrthoDB" id="9804753at2"/>
<dbReference type="UniPathway" id="UPA00219"/>
<dbReference type="Proteomes" id="UP000000268">
    <property type="component" value="Chromosome"/>
</dbReference>
<dbReference type="GO" id="GO:0005829">
    <property type="term" value="C:cytosol"/>
    <property type="evidence" value="ECO:0007669"/>
    <property type="project" value="TreeGrafter"/>
</dbReference>
<dbReference type="GO" id="GO:0071949">
    <property type="term" value="F:FAD binding"/>
    <property type="evidence" value="ECO:0007669"/>
    <property type="project" value="InterPro"/>
</dbReference>
<dbReference type="GO" id="GO:0008762">
    <property type="term" value="F:UDP-N-acetylmuramate dehydrogenase activity"/>
    <property type="evidence" value="ECO:0007669"/>
    <property type="project" value="UniProtKB-UniRule"/>
</dbReference>
<dbReference type="GO" id="GO:0051301">
    <property type="term" value="P:cell division"/>
    <property type="evidence" value="ECO:0007669"/>
    <property type="project" value="UniProtKB-KW"/>
</dbReference>
<dbReference type="GO" id="GO:0071555">
    <property type="term" value="P:cell wall organization"/>
    <property type="evidence" value="ECO:0007669"/>
    <property type="project" value="UniProtKB-KW"/>
</dbReference>
<dbReference type="GO" id="GO:0009252">
    <property type="term" value="P:peptidoglycan biosynthetic process"/>
    <property type="evidence" value="ECO:0007669"/>
    <property type="project" value="UniProtKB-UniRule"/>
</dbReference>
<dbReference type="GO" id="GO:0008360">
    <property type="term" value="P:regulation of cell shape"/>
    <property type="evidence" value="ECO:0007669"/>
    <property type="project" value="UniProtKB-KW"/>
</dbReference>
<dbReference type="Gene3D" id="3.30.465.10">
    <property type="match status" value="1"/>
</dbReference>
<dbReference type="Gene3D" id="3.90.78.10">
    <property type="entry name" value="UDP-N-acetylenolpyruvoylglucosamine reductase, C-terminal domain"/>
    <property type="match status" value="1"/>
</dbReference>
<dbReference type="Gene3D" id="3.30.43.10">
    <property type="entry name" value="Uridine Diphospho-n-acetylenolpyruvylglucosamine Reductase, domain 2"/>
    <property type="match status" value="1"/>
</dbReference>
<dbReference type="HAMAP" id="MF_00037">
    <property type="entry name" value="MurB"/>
    <property type="match status" value="1"/>
</dbReference>
<dbReference type="InterPro" id="IPR016166">
    <property type="entry name" value="FAD-bd_PCMH"/>
</dbReference>
<dbReference type="InterPro" id="IPR036318">
    <property type="entry name" value="FAD-bd_PCMH-like_sf"/>
</dbReference>
<dbReference type="InterPro" id="IPR016167">
    <property type="entry name" value="FAD-bd_PCMH_sub1"/>
</dbReference>
<dbReference type="InterPro" id="IPR016169">
    <property type="entry name" value="FAD-bd_PCMH_sub2"/>
</dbReference>
<dbReference type="InterPro" id="IPR003170">
    <property type="entry name" value="MurB"/>
</dbReference>
<dbReference type="InterPro" id="IPR011601">
    <property type="entry name" value="MurB_C"/>
</dbReference>
<dbReference type="InterPro" id="IPR036635">
    <property type="entry name" value="MurB_C_sf"/>
</dbReference>
<dbReference type="InterPro" id="IPR006094">
    <property type="entry name" value="Oxid_FAD_bind_N"/>
</dbReference>
<dbReference type="NCBIfam" id="TIGR00179">
    <property type="entry name" value="murB"/>
    <property type="match status" value="1"/>
</dbReference>
<dbReference type="NCBIfam" id="NF010480">
    <property type="entry name" value="PRK13905.1"/>
    <property type="match status" value="1"/>
</dbReference>
<dbReference type="PANTHER" id="PTHR21071">
    <property type="entry name" value="UDP-N-ACETYLENOLPYRUVOYLGLUCOSAMINE REDUCTASE"/>
    <property type="match status" value="1"/>
</dbReference>
<dbReference type="PANTHER" id="PTHR21071:SF4">
    <property type="entry name" value="UDP-N-ACETYLENOLPYRUVOYLGLUCOSAMINE REDUCTASE"/>
    <property type="match status" value="1"/>
</dbReference>
<dbReference type="Pfam" id="PF01565">
    <property type="entry name" value="FAD_binding_4"/>
    <property type="match status" value="1"/>
</dbReference>
<dbReference type="Pfam" id="PF02873">
    <property type="entry name" value="MurB_C"/>
    <property type="match status" value="1"/>
</dbReference>
<dbReference type="SUPFAM" id="SSF56176">
    <property type="entry name" value="FAD-binding/transporter-associated domain-like"/>
    <property type="match status" value="1"/>
</dbReference>
<dbReference type="SUPFAM" id="SSF56194">
    <property type="entry name" value="Uridine diphospho-N-Acetylenolpyruvylglucosamine reductase, MurB, C-terminal domain"/>
    <property type="match status" value="1"/>
</dbReference>
<dbReference type="PROSITE" id="PS51387">
    <property type="entry name" value="FAD_PCMH"/>
    <property type="match status" value="1"/>
</dbReference>
<keyword id="KW-0131">Cell cycle</keyword>
<keyword id="KW-0132">Cell division</keyword>
<keyword id="KW-0133">Cell shape</keyword>
<keyword id="KW-0961">Cell wall biogenesis/degradation</keyword>
<keyword id="KW-0963">Cytoplasm</keyword>
<keyword id="KW-0274">FAD</keyword>
<keyword id="KW-0285">Flavoprotein</keyword>
<keyword id="KW-0521">NADP</keyword>
<keyword id="KW-0560">Oxidoreductase</keyword>
<keyword id="KW-0573">Peptidoglycan synthesis</keyword>
<keyword id="KW-1185">Reference proteome</keyword>
<organism>
    <name type="scientific">Acaryochloris marina (strain MBIC 11017)</name>
    <dbReference type="NCBI Taxonomy" id="329726"/>
    <lineage>
        <taxon>Bacteria</taxon>
        <taxon>Bacillati</taxon>
        <taxon>Cyanobacteriota</taxon>
        <taxon>Cyanophyceae</taxon>
        <taxon>Acaryochloridales</taxon>
        <taxon>Acaryochloridaceae</taxon>
        <taxon>Acaryochloris</taxon>
    </lineage>
</organism>
<proteinExistence type="inferred from homology"/>
<gene>
    <name evidence="1" type="primary">murB</name>
    <name type="ordered locus">AM1_1799</name>
</gene>
<name>MURB_ACAM1</name>
<feature type="chain" id="PRO_0000332442" description="UDP-N-acetylenolpyruvoylglucosamine reductase">
    <location>
        <begin position="1"/>
        <end position="308"/>
    </location>
</feature>
<feature type="domain" description="FAD-binding PCMH-type" evidence="1">
    <location>
        <begin position="30"/>
        <end position="213"/>
    </location>
</feature>
<feature type="active site" evidence="1">
    <location>
        <position position="176"/>
    </location>
</feature>
<feature type="active site" description="Proton donor" evidence="1">
    <location>
        <position position="227"/>
    </location>
</feature>
<feature type="active site" evidence="1">
    <location>
        <position position="297"/>
    </location>
</feature>